<reference key="1">
    <citation type="journal article" date="2006" name="Proc. Natl. Acad. Sci. U.S.A.">
        <title>AtALMT1, which encodes a malate transporter, is identified as one of several genes critical for aluminum tolerance in Arabidopsis.</title>
        <authorList>
            <person name="Hoekenga O.A."/>
            <person name="Maron L.G."/>
            <person name="Pineros M.A."/>
            <person name="Cancado G.M."/>
            <person name="Shaff J."/>
            <person name="Kobayashi Y."/>
            <person name="Ryan P.R."/>
            <person name="Dong B."/>
            <person name="Delhaize E."/>
            <person name="Sasaki T."/>
            <person name="Matsumoto H."/>
            <person name="Yamamoto Y."/>
            <person name="Koyama H."/>
            <person name="Kochian L.V."/>
        </authorList>
    </citation>
    <scope>NUCLEOTIDE SEQUENCE [GENOMIC DNA]</scope>
    <scope>FUNCTION</scope>
    <scope>TISSUE SPECIFICITY</scope>
    <scope>INDUCTION BY ALUMINUM</scope>
    <scope>DISRUPTION PHENOTYPE</scope>
    <scope>GENE FAMILY</scope>
    <scope>NOMENCLATURE</scope>
    <source>
        <strain>cv. Bay-0</strain>
        <strain>cv. Cvi-0</strain>
        <strain>cv. Landsberg erecta</strain>
        <strain>cv. Nd-0</strain>
        <strain>cv. No-0</strain>
    </source>
</reference>
<reference key="2">
    <citation type="journal article" date="2007" name="Plant Physiol.">
        <title>Characterization of AtALMT1 expression in aluminum-inducible malate release and its role for rhizotoxic stress tolerance in Arabidopsis.</title>
        <authorList>
            <person name="Kobayashi Y."/>
            <person name="Hoekenga O.A."/>
            <person name="Ito H."/>
            <person name="Nakashima M."/>
            <person name="Saito S."/>
            <person name="Shaff J.E."/>
            <person name="Maron L.G."/>
            <person name="Pineros M.A."/>
            <person name="Kochian L.V."/>
            <person name="Koyama H."/>
        </authorList>
    </citation>
    <scope>NUCLEOTIDE SEQUENCE [MRNA]</scope>
    <scope>FUNCTION</scope>
    <scope>INDUCTION BY ALUMINUM AND RHIZOTOXIC TREATMENTS</scope>
    <scope>ACTIVITY REGULATION</scope>
    <scope>DISRUPTION PHENOTYPE</scope>
    <scope>PHOSPHORYLATION</scope>
    <scope>TISSUE SPECIFICITY</scope>
    <source>
        <strain>cv. Col-4</strain>
        <strain>cv. Wa-1</strain>
    </source>
</reference>
<reference key="3">
    <citation type="journal article" date="2000" name="Nature">
        <title>Sequence and analysis of chromosome 1 of the plant Arabidopsis thaliana.</title>
        <authorList>
            <person name="Theologis A."/>
            <person name="Ecker J.R."/>
            <person name="Palm C.J."/>
            <person name="Federspiel N.A."/>
            <person name="Kaul S."/>
            <person name="White O."/>
            <person name="Alonso J."/>
            <person name="Altafi H."/>
            <person name="Araujo R."/>
            <person name="Bowman C.L."/>
            <person name="Brooks S.Y."/>
            <person name="Buehler E."/>
            <person name="Chan A."/>
            <person name="Chao Q."/>
            <person name="Chen H."/>
            <person name="Cheuk R.F."/>
            <person name="Chin C.W."/>
            <person name="Chung M.K."/>
            <person name="Conn L."/>
            <person name="Conway A.B."/>
            <person name="Conway A.R."/>
            <person name="Creasy T.H."/>
            <person name="Dewar K."/>
            <person name="Dunn P."/>
            <person name="Etgu P."/>
            <person name="Feldblyum T.V."/>
            <person name="Feng J.-D."/>
            <person name="Fong B."/>
            <person name="Fujii C.Y."/>
            <person name="Gill J.E."/>
            <person name="Goldsmith A.D."/>
            <person name="Haas B."/>
            <person name="Hansen N.F."/>
            <person name="Hughes B."/>
            <person name="Huizar L."/>
            <person name="Hunter J.L."/>
            <person name="Jenkins J."/>
            <person name="Johnson-Hopson C."/>
            <person name="Khan S."/>
            <person name="Khaykin E."/>
            <person name="Kim C.J."/>
            <person name="Koo H.L."/>
            <person name="Kremenetskaia I."/>
            <person name="Kurtz D.B."/>
            <person name="Kwan A."/>
            <person name="Lam B."/>
            <person name="Langin-Hooper S."/>
            <person name="Lee A."/>
            <person name="Lee J.M."/>
            <person name="Lenz C.A."/>
            <person name="Li J.H."/>
            <person name="Li Y.-P."/>
            <person name="Lin X."/>
            <person name="Liu S.X."/>
            <person name="Liu Z.A."/>
            <person name="Luros J.S."/>
            <person name="Maiti R."/>
            <person name="Marziali A."/>
            <person name="Militscher J."/>
            <person name="Miranda M."/>
            <person name="Nguyen M."/>
            <person name="Nierman W.C."/>
            <person name="Osborne B.I."/>
            <person name="Pai G."/>
            <person name="Peterson J."/>
            <person name="Pham P.K."/>
            <person name="Rizzo M."/>
            <person name="Rooney T."/>
            <person name="Rowley D."/>
            <person name="Sakano H."/>
            <person name="Salzberg S.L."/>
            <person name="Schwartz J.R."/>
            <person name="Shinn P."/>
            <person name="Southwick A.M."/>
            <person name="Sun H."/>
            <person name="Tallon L.J."/>
            <person name="Tambunga G."/>
            <person name="Toriumi M.J."/>
            <person name="Town C.D."/>
            <person name="Utterback T."/>
            <person name="Van Aken S."/>
            <person name="Vaysberg M."/>
            <person name="Vysotskaia V.S."/>
            <person name="Walker M."/>
            <person name="Wu D."/>
            <person name="Yu G."/>
            <person name="Fraser C.M."/>
            <person name="Venter J.C."/>
            <person name="Davis R.W."/>
        </authorList>
    </citation>
    <scope>NUCLEOTIDE SEQUENCE [LARGE SCALE GENOMIC DNA]</scope>
    <source>
        <strain>cv. Columbia</strain>
    </source>
</reference>
<reference key="4">
    <citation type="journal article" date="2017" name="Plant J.">
        <title>Araport11: a complete reannotation of the Arabidopsis thaliana reference genome.</title>
        <authorList>
            <person name="Cheng C.Y."/>
            <person name="Krishnakumar V."/>
            <person name="Chan A.P."/>
            <person name="Thibaud-Nissen F."/>
            <person name="Schobel S."/>
            <person name="Town C.D."/>
        </authorList>
    </citation>
    <scope>GENOME REANNOTATION</scope>
    <source>
        <strain>cv. Columbia</strain>
    </source>
</reference>
<reference key="5">
    <citation type="journal article" date="2009" name="Plant J.">
        <title>Aluminum-activated citrate and malate transporters from the MATE and ALMT families function independently to confer Arabidopsis aluminum tolerance.</title>
        <authorList>
            <person name="Liu J."/>
            <person name="Magalhaes J.V."/>
            <person name="Shaff J."/>
            <person name="Kochian L.V."/>
        </authorList>
    </citation>
    <scope>FUNCTION</scope>
    <scope>DISRUPTION PHENOTYPE</scope>
</reference>
<reference key="6">
    <citation type="journal article" date="2009" name="Plant Physiol.">
        <title>STOP1 regulates multiple genes that protect arabidopsis from proton and aluminum toxicities.</title>
        <authorList>
            <person name="Sawaki Y."/>
            <person name="Iuchi S."/>
            <person name="Kobayashi Y."/>
            <person name="Kobayashi Y."/>
            <person name="Ikka T."/>
            <person name="Sakurai N."/>
            <person name="Fujita M."/>
            <person name="Shinozaki K."/>
            <person name="Shibata D."/>
            <person name="Kobayashi M."/>
            <person name="Koyama H."/>
        </authorList>
    </citation>
    <scope>FUNCTION</scope>
    <scope>DISRUPTION PHENOTYPE</scope>
</reference>
<keyword id="KW-0002">3D-structure</keyword>
<keyword id="KW-1003">Cell membrane</keyword>
<keyword id="KW-0407">Ion channel</keyword>
<keyword id="KW-0406">Ion transport</keyword>
<keyword id="KW-0472">Membrane</keyword>
<keyword id="KW-0597">Phosphoprotein</keyword>
<keyword id="KW-1185">Reference proteome</keyword>
<keyword id="KW-0812">Transmembrane</keyword>
<keyword id="KW-1133">Transmembrane helix</keyword>
<keyword id="KW-0813">Transport</keyword>
<comment type="function">
    <text evidence="4 5 6 7">Malate transporter critical for aluminum tolerance. The STOP1 transcription factor is required for ALMT1 expression.</text>
</comment>
<comment type="activity regulation">
    <text evidence="5">Activated by external aluminum.</text>
</comment>
<comment type="subcellular location">
    <subcellularLocation>
        <location evidence="1">Cell membrane</location>
        <topology evidence="1">Multi-pass membrane protein</topology>
    </subcellularLocation>
</comment>
<comment type="tissue specificity">
    <text evidence="4 5">Expressed in roots, but not in shoots. Detected in the root apex in absence of aluminum stress and in root apices, the stele and endodermis of the elongating zone of primary and lateral roots after aluminum stress. Not expressed in cortical and epidermal cells.</text>
</comment>
<comment type="induction">
    <text evidence="4 5">Up-regulated by aluminum. Small induction by erbium (Er) and low pH stress, but no induction by cadmium, copper, lanthanum or sodium.</text>
</comment>
<comment type="PTM">
    <text evidence="1">Phosphorylated. A reversible phosphorylation is required for activation (By similarity).</text>
</comment>
<comment type="disruption phenotype">
    <text evidence="4 5 6 7">No visible phenotype when grown under normal conditions. Lack of aluminum-activated malate release and shorter roots when submitted to aluminum stress.</text>
</comment>
<comment type="miscellaneous">
    <text>Essential factor for aluminum (Al) tolerance but does not represent the major Al tolerance QTL also found on chromosome 1. Acts in parallel but independently of MATE, an aluminum-activated root citrate transporter.</text>
</comment>
<comment type="miscellaneous">
    <text>A reversible phosphorylation acting both at the transcriptional and post-transcriptional levels is required to activate malate release in response to aluminum.</text>
</comment>
<comment type="similarity">
    <text evidence="8">Belongs to the aromatic acid exporter (TC 2.A.85) family.</text>
</comment>
<dbReference type="EMBL" id="DQ465038">
    <property type="protein sequence ID" value="ABF22742.1"/>
    <property type="molecule type" value="Genomic_DNA"/>
</dbReference>
<dbReference type="EMBL" id="DQ465039">
    <property type="protein sequence ID" value="ABF22743.1"/>
    <property type="molecule type" value="Genomic_DNA"/>
</dbReference>
<dbReference type="EMBL" id="DQ465040">
    <property type="protein sequence ID" value="ABF22744.1"/>
    <property type="molecule type" value="Genomic_DNA"/>
</dbReference>
<dbReference type="EMBL" id="DQ465041">
    <property type="protein sequence ID" value="ABF22745.1"/>
    <property type="molecule type" value="Genomic_DNA"/>
</dbReference>
<dbReference type="EMBL" id="DQ465042">
    <property type="protein sequence ID" value="ABF22746.1"/>
    <property type="molecule type" value="Genomic_DNA"/>
</dbReference>
<dbReference type="EMBL" id="AC006932">
    <property type="protein sequence ID" value="AAF22890.1"/>
    <property type="molecule type" value="Genomic_DNA"/>
</dbReference>
<dbReference type="EMBL" id="CP002684">
    <property type="protein sequence ID" value="AEE28289.1"/>
    <property type="molecule type" value="Genomic_DNA"/>
</dbReference>
<dbReference type="EMBL" id="EU181365">
    <property type="protein sequence ID" value="ABW33503.1"/>
    <property type="molecule type" value="mRNA"/>
</dbReference>
<dbReference type="RefSeq" id="NP_172319.1">
    <property type="nucleotide sequence ID" value="NM_100716.5"/>
</dbReference>
<dbReference type="PDB" id="7VOJ">
    <property type="method" value="EM"/>
    <property type="resolution" value="3.00 A"/>
    <property type="chains" value="A/B=1-493"/>
</dbReference>
<dbReference type="PDB" id="7VQ3">
    <property type="method" value="EM"/>
    <property type="resolution" value="3.20 A"/>
    <property type="chains" value="A/B=1-493"/>
</dbReference>
<dbReference type="PDB" id="7VQ4">
    <property type="method" value="EM"/>
    <property type="resolution" value="3.20 A"/>
    <property type="chains" value="A/B=1-493"/>
</dbReference>
<dbReference type="PDB" id="7VQ5">
    <property type="method" value="EM"/>
    <property type="resolution" value="3.10 A"/>
    <property type="chains" value="A/B=1-493"/>
</dbReference>
<dbReference type="PDB" id="7VQ7">
    <property type="method" value="EM"/>
    <property type="resolution" value="3.60 A"/>
    <property type="chains" value="A/B=1-493"/>
</dbReference>
<dbReference type="PDB" id="9JTW">
    <property type="method" value="EM"/>
    <property type="resolution" value="3.70 A"/>
    <property type="chains" value="A/B=1-493"/>
</dbReference>
<dbReference type="PDBsum" id="7VOJ"/>
<dbReference type="PDBsum" id="7VQ3"/>
<dbReference type="PDBsum" id="7VQ4"/>
<dbReference type="PDBsum" id="7VQ5"/>
<dbReference type="PDBsum" id="7VQ7"/>
<dbReference type="PDBsum" id="9JTW"/>
<dbReference type="EMDB" id="EMD-32050"/>
<dbReference type="EMDB" id="EMD-32084"/>
<dbReference type="EMDB" id="EMD-32085"/>
<dbReference type="EMDB" id="EMD-32086"/>
<dbReference type="EMDB" id="EMD-32087"/>
<dbReference type="EMDB" id="EMD-61818"/>
<dbReference type="SMR" id="Q9SJE9"/>
<dbReference type="BioGRID" id="22604">
    <property type="interactions" value="28"/>
</dbReference>
<dbReference type="IntAct" id="Q9SJE9">
    <property type="interactions" value="28"/>
</dbReference>
<dbReference type="STRING" id="3702.Q9SJE9"/>
<dbReference type="TCDB" id="2.A.85.2.3">
    <property type="family name" value="the aromatic acid exporter (arae) family"/>
</dbReference>
<dbReference type="PaxDb" id="3702-AT1G08430.1"/>
<dbReference type="ProteomicsDB" id="244957"/>
<dbReference type="EnsemblPlants" id="AT1G08430.1">
    <property type="protein sequence ID" value="AT1G08430.1"/>
    <property type="gene ID" value="AT1G08430"/>
</dbReference>
<dbReference type="GeneID" id="837363"/>
<dbReference type="Gramene" id="AT1G08430.1">
    <property type="protein sequence ID" value="AT1G08430.1"/>
    <property type="gene ID" value="AT1G08430"/>
</dbReference>
<dbReference type="KEGG" id="ath:AT1G08430"/>
<dbReference type="Araport" id="AT1G08430"/>
<dbReference type="TAIR" id="AT1G08430">
    <property type="gene designation" value="ALMT1"/>
</dbReference>
<dbReference type="eggNOG" id="KOG4711">
    <property type="taxonomic scope" value="Eukaryota"/>
</dbReference>
<dbReference type="HOGENOM" id="CLU_020841_2_2_1"/>
<dbReference type="InParanoid" id="Q9SJE9"/>
<dbReference type="OMA" id="SIGCAMP"/>
<dbReference type="OrthoDB" id="68611at2759"/>
<dbReference type="PhylomeDB" id="Q9SJE9"/>
<dbReference type="PRO" id="PR:Q9SJE9"/>
<dbReference type="Proteomes" id="UP000006548">
    <property type="component" value="Chromosome 1"/>
</dbReference>
<dbReference type="ExpressionAtlas" id="Q9SJE9">
    <property type="expression patterns" value="baseline and differential"/>
</dbReference>
<dbReference type="GO" id="GO:0005886">
    <property type="term" value="C:plasma membrane"/>
    <property type="evidence" value="ECO:0007669"/>
    <property type="project" value="UniProtKB-SubCell"/>
</dbReference>
<dbReference type="GO" id="GO:0015140">
    <property type="term" value="F:malate transmembrane transporter activity"/>
    <property type="evidence" value="ECO:0000314"/>
    <property type="project" value="TAIR"/>
</dbReference>
<dbReference type="GO" id="GO:0071423">
    <property type="term" value="P:malate transmembrane transport"/>
    <property type="evidence" value="ECO:0000315"/>
    <property type="project" value="TAIR"/>
</dbReference>
<dbReference type="GO" id="GO:0034220">
    <property type="term" value="P:monoatomic ion transmembrane transport"/>
    <property type="evidence" value="ECO:0007669"/>
    <property type="project" value="UniProtKB-KW"/>
</dbReference>
<dbReference type="GO" id="GO:0010044">
    <property type="term" value="P:response to aluminum ion"/>
    <property type="evidence" value="ECO:0000315"/>
    <property type="project" value="TAIR"/>
</dbReference>
<dbReference type="InterPro" id="IPR020966">
    <property type="entry name" value="ALMT"/>
</dbReference>
<dbReference type="PANTHER" id="PTHR31086">
    <property type="entry name" value="ALUMINUM-ACTIVATED MALATE TRANSPORTER 10"/>
    <property type="match status" value="1"/>
</dbReference>
<dbReference type="Pfam" id="PF11744">
    <property type="entry name" value="ALMT"/>
    <property type="match status" value="1"/>
</dbReference>
<proteinExistence type="evidence at protein level"/>
<feature type="chain" id="PRO_0000401460" description="Aluminum-activated malate transporter 1">
    <location>
        <begin position="1"/>
        <end position="493"/>
    </location>
</feature>
<feature type="transmembrane region" description="Helical" evidence="2">
    <location>
        <begin position="28"/>
        <end position="48"/>
    </location>
</feature>
<feature type="transmembrane region" description="Helical" evidence="2">
    <location>
        <begin position="51"/>
        <end position="71"/>
    </location>
</feature>
<feature type="transmembrane region" description="Helical" evidence="2">
    <location>
        <begin position="104"/>
        <end position="124"/>
    </location>
</feature>
<feature type="transmembrane region" description="Helical" evidence="2">
    <location>
        <begin position="133"/>
        <end position="153"/>
    </location>
</feature>
<feature type="transmembrane region" description="Helical" evidence="2">
    <location>
        <begin position="169"/>
        <end position="189"/>
    </location>
</feature>
<feature type="region of interest" description="Disordered" evidence="3">
    <location>
        <begin position="441"/>
        <end position="460"/>
    </location>
</feature>
<feature type="compositionally biased region" description="Basic and acidic residues" evidence="3">
    <location>
        <begin position="441"/>
        <end position="452"/>
    </location>
</feature>
<feature type="modified residue" description="Phosphoserine" evidence="2">
    <location>
        <position position="320"/>
    </location>
</feature>
<feature type="modified residue" description="Phosphoserine" evidence="2">
    <location>
        <position position="327"/>
    </location>
</feature>
<feature type="modified residue" description="Phosphothreonine" evidence="2">
    <location>
        <position position="385"/>
    </location>
</feature>
<feature type="sequence variant" description="In strain: cv. Nd-0, cv. No-0.">
    <original>VLVS</original>
    <variation>GLVA</variation>
    <location>
        <begin position="33"/>
        <end position="36"/>
    </location>
</feature>
<feature type="sequence variant" description="In strain: cv. Bay-0, cv. Landsberg erecta.">
    <original>S</original>
    <variation>A</variation>
    <location>
        <position position="36"/>
    </location>
</feature>
<feature type="sequence variant" description="In strain: cv. Wa-1; induces hypersensitivity to aluminum stress.">
    <location>
        <begin position="77"/>
        <end position="493"/>
    </location>
</feature>
<feature type="sequence variant" description="In strain: cv. Bay-0.">
    <original>S</original>
    <variation>F</variation>
    <location>
        <position position="194"/>
    </location>
</feature>
<feature type="sequence variant" description="In strain: cv. Landsberg erecta.">
    <original>P</original>
    <variation>S</variation>
    <location>
        <position position="257"/>
    </location>
</feature>
<feature type="sequence variant" description="In strain: cv. Bay-0, cv. Cvi-0, cv. Landsberg erecta, cv. Nd-0, cv. No-0.">
    <original>I</original>
    <variation>V</variation>
    <location>
        <position position="298"/>
    </location>
</feature>
<feature type="sequence variant" description="In strain: cv. Cvi-0.">
    <original>V</original>
    <variation>I</variation>
    <location>
        <position position="375"/>
    </location>
</feature>
<feature type="helix" evidence="9">
    <location>
        <begin position="2"/>
        <end position="17"/>
    </location>
</feature>
<feature type="helix" evidence="9">
    <location>
        <begin position="20"/>
        <end position="41"/>
    </location>
</feature>
<feature type="strand" evidence="9">
    <location>
        <begin position="51"/>
        <end position="53"/>
    </location>
</feature>
<feature type="helix" evidence="9">
    <location>
        <begin position="56"/>
        <end position="65"/>
    </location>
</feature>
<feature type="strand" evidence="9">
    <location>
        <begin position="68"/>
        <end position="70"/>
    </location>
</feature>
<feature type="helix" evidence="9">
    <location>
        <begin position="71"/>
        <end position="101"/>
    </location>
</feature>
<feature type="strand" evidence="9">
    <location>
        <begin position="103"/>
        <end position="105"/>
    </location>
</feature>
<feature type="helix" evidence="9">
    <location>
        <begin position="106"/>
        <end position="124"/>
    </location>
</feature>
<feature type="helix" evidence="9">
    <location>
        <begin position="128"/>
        <end position="132"/>
    </location>
</feature>
<feature type="helix" evidence="9">
    <location>
        <begin position="135"/>
        <end position="149"/>
    </location>
</feature>
<feature type="helix" evidence="9">
    <location>
        <begin position="157"/>
        <end position="182"/>
    </location>
</feature>
<feature type="helix" evidence="9">
    <location>
        <begin position="188"/>
        <end position="213"/>
    </location>
</feature>
<feature type="helix" evidence="9">
    <location>
        <begin position="223"/>
        <end position="240"/>
    </location>
</feature>
<feature type="helix" evidence="9">
    <location>
        <begin position="243"/>
        <end position="253"/>
    </location>
</feature>
<feature type="strand" evidence="10">
    <location>
        <begin position="260"/>
        <end position="262"/>
    </location>
</feature>
<feature type="helix" evidence="9">
    <location>
        <begin position="268"/>
        <end position="293"/>
    </location>
</feature>
<feature type="helix" evidence="9">
    <location>
        <begin position="300"/>
        <end position="304"/>
    </location>
</feature>
<feature type="helix" evidence="9">
    <location>
        <begin position="307"/>
        <end position="329"/>
    </location>
</feature>
<feature type="helix" evidence="9">
    <location>
        <begin position="336"/>
        <end position="355"/>
    </location>
</feature>
<feature type="turn" evidence="9">
    <location>
        <begin position="356"/>
        <end position="360"/>
    </location>
</feature>
<feature type="strand" evidence="9">
    <location>
        <begin position="361"/>
        <end position="363"/>
    </location>
</feature>
<feature type="helix" evidence="9">
    <location>
        <begin position="365"/>
        <end position="398"/>
    </location>
</feature>
<sequence length="493" mass="55077">MEKVREIVREGIRVGNEDPRRIIHAFKVGLALVLVSSFYYYQPFGPFTDYFGINAMWAVMTVVVVFEFSVGATLGKGLNRGVATLVAGGLGIGAHQLARLSGATVEPILLVMLVFVQAALSTFVRFFPWVKTKFDYGILIFILTFALISLSGFRDEEIMDLAESRLSTVVIGGVSCILISIFVCPVWAGQDLHSLLASNFDTLSHFLQDFGDEYFEAREKGDYKVVEKRKKNLERYKSVLDSKSDEEALANYAEWEPPHGQFRFRHPWKQYVAVGALLRQCAYRIDALNSYINSDFQIPVDIKKKLETPLRRMSSESGNSMKEMSISLKQMIKSSSSDIHVSNSQAACKSLSTLLKSGILNDVEPLQMISLMTTVSMLIDIVNLTEKISESVHELASAARFKNKMRPTVLYEKSDSGSIGRAMPIDSHEDHHVVTVLHDVDNDRSNNVDDSRGGSSQDSCHHVAIKIVDDNSNHEKHEDGEIHVHTLSNGHLQ</sequence>
<evidence type="ECO:0000250" key="1"/>
<evidence type="ECO:0000255" key="2"/>
<evidence type="ECO:0000256" key="3">
    <source>
        <dbReference type="SAM" id="MobiDB-lite"/>
    </source>
</evidence>
<evidence type="ECO:0000269" key="4">
    <source>
    </source>
</evidence>
<evidence type="ECO:0000269" key="5">
    <source>
    </source>
</evidence>
<evidence type="ECO:0000269" key="6">
    <source>
    </source>
</evidence>
<evidence type="ECO:0000269" key="7">
    <source>
    </source>
</evidence>
<evidence type="ECO:0000305" key="8"/>
<evidence type="ECO:0007829" key="9">
    <source>
        <dbReference type="PDB" id="7VOJ"/>
    </source>
</evidence>
<evidence type="ECO:0007829" key="10">
    <source>
        <dbReference type="PDB" id="7VQ4"/>
    </source>
</evidence>
<protein>
    <recommendedName>
        <fullName>Aluminum-activated malate transporter 1</fullName>
        <shortName>AtALMT1</shortName>
    </recommendedName>
</protein>
<name>ALMT1_ARATH</name>
<accession>Q9SJE9</accession>
<accession>A8VPV4</accession>
<accession>Q15EV0</accession>
<accession>Q15EV1</accession>
<accession>Q15EV2</accession>
<accession>Q15EV3</accession>
<accession>Q15EV4</accession>
<gene>
    <name type="primary">ALMT1</name>
    <name type="ordered locus">At1g08430</name>
    <name type="ORF">T27G7.11</name>
</gene>
<organism>
    <name type="scientific">Arabidopsis thaliana</name>
    <name type="common">Mouse-ear cress</name>
    <dbReference type="NCBI Taxonomy" id="3702"/>
    <lineage>
        <taxon>Eukaryota</taxon>
        <taxon>Viridiplantae</taxon>
        <taxon>Streptophyta</taxon>
        <taxon>Embryophyta</taxon>
        <taxon>Tracheophyta</taxon>
        <taxon>Spermatophyta</taxon>
        <taxon>Magnoliopsida</taxon>
        <taxon>eudicotyledons</taxon>
        <taxon>Gunneridae</taxon>
        <taxon>Pentapetalae</taxon>
        <taxon>rosids</taxon>
        <taxon>malvids</taxon>
        <taxon>Brassicales</taxon>
        <taxon>Brassicaceae</taxon>
        <taxon>Camelineae</taxon>
        <taxon>Arabidopsis</taxon>
    </lineage>
</organism>